<comment type="catalytic activity">
    <reaction evidence="1">
        <text>2-(N(omega)-L-arginino)succinate = fumarate + L-arginine</text>
        <dbReference type="Rhea" id="RHEA:24020"/>
        <dbReference type="ChEBI" id="CHEBI:29806"/>
        <dbReference type="ChEBI" id="CHEBI:32682"/>
        <dbReference type="ChEBI" id="CHEBI:57472"/>
        <dbReference type="EC" id="4.3.2.1"/>
    </reaction>
</comment>
<comment type="pathway">
    <text evidence="1">Amino-acid biosynthesis; L-arginine biosynthesis; L-arginine from L-ornithine and carbamoyl phosphate: step 3/3.</text>
</comment>
<comment type="subcellular location">
    <subcellularLocation>
        <location evidence="1">Cytoplasm</location>
    </subcellularLocation>
</comment>
<comment type="similarity">
    <text evidence="1">Belongs to the lyase 1 family. Argininosuccinate lyase subfamily.</text>
</comment>
<accession>A8GL81</accession>
<feature type="chain" id="PRO_1000057055" description="Argininosuccinate lyase">
    <location>
        <begin position="1"/>
        <end position="457"/>
    </location>
</feature>
<gene>
    <name evidence="1" type="primary">argH</name>
    <name type="ordered locus">Spro_4778</name>
</gene>
<evidence type="ECO:0000255" key="1">
    <source>
        <dbReference type="HAMAP-Rule" id="MF_00006"/>
    </source>
</evidence>
<organism>
    <name type="scientific">Serratia proteamaculans (strain 568)</name>
    <dbReference type="NCBI Taxonomy" id="399741"/>
    <lineage>
        <taxon>Bacteria</taxon>
        <taxon>Pseudomonadati</taxon>
        <taxon>Pseudomonadota</taxon>
        <taxon>Gammaproteobacteria</taxon>
        <taxon>Enterobacterales</taxon>
        <taxon>Yersiniaceae</taxon>
        <taxon>Serratia</taxon>
    </lineage>
</organism>
<protein>
    <recommendedName>
        <fullName evidence="1">Argininosuccinate lyase</fullName>
        <shortName evidence="1">ASAL</shortName>
        <ecNumber evidence="1">4.3.2.1</ecNumber>
    </recommendedName>
    <alternativeName>
        <fullName evidence="1">Arginosuccinase</fullName>
    </alternativeName>
</protein>
<proteinExistence type="inferred from homology"/>
<sequence length="457" mass="49969">MALWGGRFSQAADQRFKQLNDSLRFDYRLAEQDIVGSVAWSKALVTVNVLTAAEQQQLEQALNGLLAEVQADPQAIVSSDAEDIHSWVEQKLIDQVGDLGKKLHTGRSRNDQVATDLKLWCKQQIGELHQAIVQLQQALVETAEANQDAVMPGYTHLQRAQPVTFAHWCLAYVEMLARDESRLQDTLKRLDVSPLGSGALAGTAYPIDREQLAGWLGFASATRNSLDSVSDRDHVLELLSNASISMVHLSRFAEDLIFFNSGEAAFVDLSDRVTSGSSLMPQKKNPDALELIRGKCGRVQGALTGMMMTLKGLPLAYNKDMQEDKEGLFDALDTWMDCLQMAALVLDGIQVKRPRCKEAAEQGYANSTELADYLVAKGVPFREAHHIVGEAVVEAIRQGKALEALPLTDLQKFSAVIGDDVYPILALQSCLDKRSAKGGVSPQQVASAIAAAKQRLA</sequence>
<dbReference type="EC" id="4.3.2.1" evidence="1"/>
<dbReference type="EMBL" id="CP000826">
    <property type="protein sequence ID" value="ABV43871.1"/>
    <property type="molecule type" value="Genomic_DNA"/>
</dbReference>
<dbReference type="SMR" id="A8GL81"/>
<dbReference type="STRING" id="399741.Spro_4778"/>
<dbReference type="KEGG" id="spe:Spro_4778"/>
<dbReference type="eggNOG" id="COG0165">
    <property type="taxonomic scope" value="Bacteria"/>
</dbReference>
<dbReference type="HOGENOM" id="CLU_027272_2_3_6"/>
<dbReference type="OrthoDB" id="9769623at2"/>
<dbReference type="UniPathway" id="UPA00068">
    <property type="reaction ID" value="UER00114"/>
</dbReference>
<dbReference type="GO" id="GO:0005829">
    <property type="term" value="C:cytosol"/>
    <property type="evidence" value="ECO:0007669"/>
    <property type="project" value="TreeGrafter"/>
</dbReference>
<dbReference type="GO" id="GO:0004056">
    <property type="term" value="F:argininosuccinate lyase activity"/>
    <property type="evidence" value="ECO:0007669"/>
    <property type="project" value="UniProtKB-UniRule"/>
</dbReference>
<dbReference type="GO" id="GO:0042450">
    <property type="term" value="P:arginine biosynthetic process via ornithine"/>
    <property type="evidence" value="ECO:0007669"/>
    <property type="project" value="InterPro"/>
</dbReference>
<dbReference type="GO" id="GO:0006526">
    <property type="term" value="P:L-arginine biosynthetic process"/>
    <property type="evidence" value="ECO:0007669"/>
    <property type="project" value="UniProtKB-UniRule"/>
</dbReference>
<dbReference type="CDD" id="cd01359">
    <property type="entry name" value="Argininosuccinate_lyase"/>
    <property type="match status" value="1"/>
</dbReference>
<dbReference type="FunFam" id="1.10.40.30:FF:000001">
    <property type="entry name" value="Argininosuccinate lyase"/>
    <property type="match status" value="1"/>
</dbReference>
<dbReference type="FunFam" id="1.20.200.10:FF:000006">
    <property type="entry name" value="Argininosuccinate lyase"/>
    <property type="match status" value="1"/>
</dbReference>
<dbReference type="Gene3D" id="1.10.40.30">
    <property type="entry name" value="Fumarase/aspartase (C-terminal domain)"/>
    <property type="match status" value="1"/>
</dbReference>
<dbReference type="Gene3D" id="1.20.200.10">
    <property type="entry name" value="Fumarase/aspartase (Central domain)"/>
    <property type="match status" value="1"/>
</dbReference>
<dbReference type="Gene3D" id="1.10.275.10">
    <property type="entry name" value="Fumarase/aspartase (N-terminal domain)"/>
    <property type="match status" value="1"/>
</dbReference>
<dbReference type="HAMAP" id="MF_00006">
    <property type="entry name" value="Arg_succ_lyase"/>
    <property type="match status" value="1"/>
</dbReference>
<dbReference type="InterPro" id="IPR029419">
    <property type="entry name" value="Arg_succ_lyase_C"/>
</dbReference>
<dbReference type="InterPro" id="IPR009049">
    <property type="entry name" value="Argininosuccinate_lyase"/>
</dbReference>
<dbReference type="InterPro" id="IPR024083">
    <property type="entry name" value="Fumarase/histidase_N"/>
</dbReference>
<dbReference type="InterPro" id="IPR020557">
    <property type="entry name" value="Fumarate_lyase_CS"/>
</dbReference>
<dbReference type="InterPro" id="IPR000362">
    <property type="entry name" value="Fumarate_lyase_fam"/>
</dbReference>
<dbReference type="InterPro" id="IPR022761">
    <property type="entry name" value="Fumarate_lyase_N"/>
</dbReference>
<dbReference type="InterPro" id="IPR008948">
    <property type="entry name" value="L-Aspartase-like"/>
</dbReference>
<dbReference type="NCBIfam" id="TIGR00838">
    <property type="entry name" value="argH"/>
    <property type="match status" value="1"/>
</dbReference>
<dbReference type="NCBIfam" id="NF008964">
    <property type="entry name" value="PRK12308.1"/>
    <property type="match status" value="1"/>
</dbReference>
<dbReference type="PANTHER" id="PTHR43814">
    <property type="entry name" value="ARGININOSUCCINATE LYASE"/>
    <property type="match status" value="1"/>
</dbReference>
<dbReference type="PANTHER" id="PTHR43814:SF1">
    <property type="entry name" value="ARGININOSUCCINATE LYASE"/>
    <property type="match status" value="1"/>
</dbReference>
<dbReference type="Pfam" id="PF14698">
    <property type="entry name" value="ASL_C2"/>
    <property type="match status" value="1"/>
</dbReference>
<dbReference type="Pfam" id="PF00206">
    <property type="entry name" value="Lyase_1"/>
    <property type="match status" value="1"/>
</dbReference>
<dbReference type="PRINTS" id="PR00145">
    <property type="entry name" value="ARGSUCLYASE"/>
</dbReference>
<dbReference type="PRINTS" id="PR00149">
    <property type="entry name" value="FUMRATELYASE"/>
</dbReference>
<dbReference type="SUPFAM" id="SSF48557">
    <property type="entry name" value="L-aspartase-like"/>
    <property type="match status" value="1"/>
</dbReference>
<dbReference type="PROSITE" id="PS00163">
    <property type="entry name" value="FUMARATE_LYASES"/>
    <property type="match status" value="1"/>
</dbReference>
<keyword id="KW-0028">Amino-acid biosynthesis</keyword>
<keyword id="KW-0055">Arginine biosynthesis</keyword>
<keyword id="KW-0963">Cytoplasm</keyword>
<keyword id="KW-0456">Lyase</keyword>
<name>ARLY_SERP5</name>
<reference key="1">
    <citation type="submission" date="2007-09" db="EMBL/GenBank/DDBJ databases">
        <title>Complete sequence of chromosome of Serratia proteamaculans 568.</title>
        <authorList>
            <consortium name="US DOE Joint Genome Institute"/>
            <person name="Copeland A."/>
            <person name="Lucas S."/>
            <person name="Lapidus A."/>
            <person name="Barry K."/>
            <person name="Glavina del Rio T."/>
            <person name="Dalin E."/>
            <person name="Tice H."/>
            <person name="Pitluck S."/>
            <person name="Chain P."/>
            <person name="Malfatti S."/>
            <person name="Shin M."/>
            <person name="Vergez L."/>
            <person name="Schmutz J."/>
            <person name="Larimer F."/>
            <person name="Land M."/>
            <person name="Hauser L."/>
            <person name="Kyrpides N."/>
            <person name="Kim E."/>
            <person name="Taghavi S."/>
            <person name="Newman L."/>
            <person name="Vangronsveld J."/>
            <person name="van der Lelie D."/>
            <person name="Richardson P."/>
        </authorList>
    </citation>
    <scope>NUCLEOTIDE SEQUENCE [LARGE SCALE GENOMIC DNA]</scope>
    <source>
        <strain>568</strain>
    </source>
</reference>